<dbReference type="EC" id="4.1.1.39" evidence="1"/>
<dbReference type="EMBL" id="L02433">
    <property type="protein sequence ID" value="AAA16292.2"/>
    <property type="molecule type" value="Genomic_DNA"/>
</dbReference>
<dbReference type="SMR" id="P28422"/>
<dbReference type="GO" id="GO:0009507">
    <property type="term" value="C:chloroplast"/>
    <property type="evidence" value="ECO:0007669"/>
    <property type="project" value="UniProtKB-SubCell"/>
</dbReference>
<dbReference type="GO" id="GO:0000287">
    <property type="term" value="F:magnesium ion binding"/>
    <property type="evidence" value="ECO:0007669"/>
    <property type="project" value="InterPro"/>
</dbReference>
<dbReference type="GO" id="GO:0004497">
    <property type="term" value="F:monooxygenase activity"/>
    <property type="evidence" value="ECO:0007669"/>
    <property type="project" value="UniProtKB-KW"/>
</dbReference>
<dbReference type="GO" id="GO:0016984">
    <property type="term" value="F:ribulose-bisphosphate carboxylase activity"/>
    <property type="evidence" value="ECO:0007669"/>
    <property type="project" value="UniProtKB-EC"/>
</dbReference>
<dbReference type="GO" id="GO:0009853">
    <property type="term" value="P:photorespiration"/>
    <property type="evidence" value="ECO:0007669"/>
    <property type="project" value="UniProtKB-KW"/>
</dbReference>
<dbReference type="GO" id="GO:0019253">
    <property type="term" value="P:reductive pentose-phosphate cycle"/>
    <property type="evidence" value="ECO:0007669"/>
    <property type="project" value="UniProtKB-KW"/>
</dbReference>
<dbReference type="CDD" id="cd08212">
    <property type="entry name" value="RuBisCO_large_I"/>
    <property type="match status" value="1"/>
</dbReference>
<dbReference type="FunFam" id="3.20.20.110:FF:000003">
    <property type="entry name" value="Ribulose bisphosphate carboxylase large chain"/>
    <property type="match status" value="1"/>
</dbReference>
<dbReference type="FunFam" id="3.30.70.150:FF:000001">
    <property type="entry name" value="Ribulose bisphosphate carboxylase large chain"/>
    <property type="match status" value="1"/>
</dbReference>
<dbReference type="Gene3D" id="3.20.20.110">
    <property type="entry name" value="Ribulose bisphosphate carboxylase, large subunit, C-terminal domain"/>
    <property type="match status" value="1"/>
</dbReference>
<dbReference type="Gene3D" id="3.30.70.150">
    <property type="entry name" value="RuBisCO large subunit, N-terminal domain"/>
    <property type="match status" value="1"/>
</dbReference>
<dbReference type="HAMAP" id="MF_01338">
    <property type="entry name" value="RuBisCO_L_type1"/>
    <property type="match status" value="1"/>
</dbReference>
<dbReference type="InterPro" id="IPR033966">
    <property type="entry name" value="RuBisCO"/>
</dbReference>
<dbReference type="InterPro" id="IPR020878">
    <property type="entry name" value="RuBisCo_large_chain_AS"/>
</dbReference>
<dbReference type="InterPro" id="IPR000685">
    <property type="entry name" value="RuBisCO_lsu_C"/>
</dbReference>
<dbReference type="InterPro" id="IPR036376">
    <property type="entry name" value="RuBisCO_lsu_C_sf"/>
</dbReference>
<dbReference type="InterPro" id="IPR017443">
    <property type="entry name" value="RuBisCO_lsu_fd_N"/>
</dbReference>
<dbReference type="InterPro" id="IPR036422">
    <property type="entry name" value="RuBisCO_lsu_N_sf"/>
</dbReference>
<dbReference type="InterPro" id="IPR020888">
    <property type="entry name" value="RuBisCO_lsuI"/>
</dbReference>
<dbReference type="NCBIfam" id="NF003252">
    <property type="entry name" value="PRK04208.1"/>
    <property type="match status" value="1"/>
</dbReference>
<dbReference type="PANTHER" id="PTHR42704">
    <property type="entry name" value="RIBULOSE BISPHOSPHATE CARBOXYLASE"/>
    <property type="match status" value="1"/>
</dbReference>
<dbReference type="PANTHER" id="PTHR42704:SF15">
    <property type="entry name" value="RIBULOSE BISPHOSPHATE CARBOXYLASE LARGE CHAIN"/>
    <property type="match status" value="1"/>
</dbReference>
<dbReference type="Pfam" id="PF00016">
    <property type="entry name" value="RuBisCO_large"/>
    <property type="match status" value="1"/>
</dbReference>
<dbReference type="Pfam" id="PF02788">
    <property type="entry name" value="RuBisCO_large_N"/>
    <property type="match status" value="1"/>
</dbReference>
<dbReference type="SFLD" id="SFLDG01052">
    <property type="entry name" value="RuBisCO"/>
    <property type="match status" value="1"/>
</dbReference>
<dbReference type="SFLD" id="SFLDS00014">
    <property type="entry name" value="RuBisCO"/>
    <property type="match status" value="1"/>
</dbReference>
<dbReference type="SFLD" id="SFLDG00301">
    <property type="entry name" value="RuBisCO-like_proteins"/>
    <property type="match status" value="1"/>
</dbReference>
<dbReference type="SUPFAM" id="SSF51649">
    <property type="entry name" value="RuBisCo, C-terminal domain"/>
    <property type="match status" value="1"/>
</dbReference>
<dbReference type="SUPFAM" id="SSF54966">
    <property type="entry name" value="RuBisCO, large subunit, small (N-terminal) domain"/>
    <property type="match status" value="1"/>
</dbReference>
<dbReference type="PROSITE" id="PS00157">
    <property type="entry name" value="RUBISCO_LARGE"/>
    <property type="match status" value="1"/>
</dbReference>
<sequence length="441" mass="48839">VGFKAGVKDYKLTYYTPDYQTKATDILAAFRVTPQPGVPPEEAGAAVAAESSTGTWTTVWTDGLTSLDRYKGRCYHIEPVAGEENQYIAYVAYPLDLFEEGSVTNMFTSIVGNVFGFKALRALRLEDLRIPPAYSKTFQGPPHGIQVERDKLNKYGRPLLGCTIKPKLGLSAKNYGRAVYECLRGGLDFTKDDENVNSQPFMRWRDRFLFCAEAIYKAQAETGEIKGHYLNATAGTCEEMTKRAVFARELGVPIVMHDYLTGGFTANTSLAHYCRDNGLLLHIHRAMHAVIDRQKNHGIHFRVLAKALRMSGGDHIHSGTVVGKLEGERDITLGFVDLLREEYIEKDRSRGIYFSQDWVSLPGVLPVASGGIHVWHMPALTEIFGDDSVLQFGGGTLGHPWGNRPGAVANRVALEACVQARNEGRDLAREGNEIIPVASKW</sequence>
<geneLocation type="chloroplast"/>
<evidence type="ECO:0000255" key="1">
    <source>
        <dbReference type="HAMAP-Rule" id="MF_01338"/>
    </source>
</evidence>
<comment type="function">
    <text evidence="1">RuBisCO catalyzes two reactions: the carboxylation of D-ribulose 1,5-bisphosphate, the primary event in carbon dioxide fixation, as well as the oxidative fragmentation of the pentose substrate in the photorespiration process. Both reactions occur simultaneously and in competition at the same active site.</text>
</comment>
<comment type="catalytic activity">
    <reaction evidence="1">
        <text>2 (2R)-3-phosphoglycerate + 2 H(+) = D-ribulose 1,5-bisphosphate + CO2 + H2O</text>
        <dbReference type="Rhea" id="RHEA:23124"/>
        <dbReference type="ChEBI" id="CHEBI:15377"/>
        <dbReference type="ChEBI" id="CHEBI:15378"/>
        <dbReference type="ChEBI" id="CHEBI:16526"/>
        <dbReference type="ChEBI" id="CHEBI:57870"/>
        <dbReference type="ChEBI" id="CHEBI:58272"/>
        <dbReference type="EC" id="4.1.1.39"/>
    </reaction>
</comment>
<comment type="catalytic activity">
    <reaction evidence="1">
        <text>D-ribulose 1,5-bisphosphate + O2 = 2-phosphoglycolate + (2R)-3-phosphoglycerate + 2 H(+)</text>
        <dbReference type="Rhea" id="RHEA:36631"/>
        <dbReference type="ChEBI" id="CHEBI:15378"/>
        <dbReference type="ChEBI" id="CHEBI:15379"/>
        <dbReference type="ChEBI" id="CHEBI:57870"/>
        <dbReference type="ChEBI" id="CHEBI:58033"/>
        <dbReference type="ChEBI" id="CHEBI:58272"/>
    </reaction>
</comment>
<comment type="cofactor">
    <cofactor evidence="1">
        <name>Mg(2+)</name>
        <dbReference type="ChEBI" id="CHEBI:18420"/>
    </cofactor>
    <text evidence="1">Binds 1 Mg(2+) ion per subunit.</text>
</comment>
<comment type="subunit">
    <text evidence="1">Heterohexadecamer of 8 large chains and 8 small chains; disulfide-linked. The disulfide link is formed within the large subunit homodimers.</text>
</comment>
<comment type="subcellular location">
    <subcellularLocation>
        <location>Plastid</location>
        <location>Chloroplast</location>
    </subcellularLocation>
</comment>
<comment type="PTM">
    <text evidence="1">The disulfide bond which can form in the large chain dimeric partners within the hexadecamer appears to be associated with oxidative stress and protein turnover.</text>
</comment>
<comment type="miscellaneous">
    <text evidence="1">The basic functional RuBisCO is composed of a large chain homodimer in a 'head-to-tail' conformation. In form I RuBisCO this homodimer is arranged in a barrel-like tetramer with the small subunits forming a tetrameric 'cap' on each end of the 'barrel'.</text>
</comment>
<comment type="similarity">
    <text evidence="1">Belongs to the RuBisCO large chain family. Type I subfamily.</text>
</comment>
<gene>
    <name evidence="1" type="primary">rbcL</name>
</gene>
<organism>
    <name type="scientific">Heliamphora nutans</name>
    <name type="common">Venezuelan marsh pitcher plant</name>
    <dbReference type="NCBI Taxonomy" id="4357"/>
    <lineage>
        <taxon>Eukaryota</taxon>
        <taxon>Viridiplantae</taxon>
        <taxon>Streptophyta</taxon>
        <taxon>Embryophyta</taxon>
        <taxon>Tracheophyta</taxon>
        <taxon>Spermatophyta</taxon>
        <taxon>Magnoliopsida</taxon>
        <taxon>eudicotyledons</taxon>
        <taxon>Gunneridae</taxon>
        <taxon>Pentapetalae</taxon>
        <taxon>asterids</taxon>
        <taxon>Ericales</taxon>
        <taxon>Sarraceniaceae</taxon>
        <taxon>Heliamphora</taxon>
    </lineage>
</organism>
<feature type="chain" id="PRO_0000062491" description="Ribulose bisphosphate carboxylase large chain">
    <location>
        <begin position="1" status="less than"/>
        <end position="441" status="greater than"/>
    </location>
</feature>
<feature type="active site" description="Proton acceptor" evidence="1">
    <location>
        <position position="165"/>
    </location>
</feature>
<feature type="active site" description="Proton acceptor" evidence="1">
    <location>
        <position position="284"/>
    </location>
</feature>
<feature type="binding site" description="in homodimeric partner" evidence="1">
    <location>
        <position position="113"/>
    </location>
    <ligand>
        <name>substrate</name>
    </ligand>
</feature>
<feature type="binding site" evidence="1">
    <location>
        <position position="163"/>
    </location>
    <ligand>
        <name>substrate</name>
    </ligand>
</feature>
<feature type="binding site" evidence="1">
    <location>
        <position position="167"/>
    </location>
    <ligand>
        <name>substrate</name>
    </ligand>
</feature>
<feature type="binding site" description="via carbamate group" evidence="1">
    <location>
        <position position="191"/>
    </location>
    <ligand>
        <name>Mg(2+)</name>
        <dbReference type="ChEBI" id="CHEBI:18420"/>
    </ligand>
</feature>
<feature type="binding site" evidence="1">
    <location>
        <position position="193"/>
    </location>
    <ligand>
        <name>Mg(2+)</name>
        <dbReference type="ChEBI" id="CHEBI:18420"/>
    </ligand>
</feature>
<feature type="binding site" evidence="1">
    <location>
        <position position="194"/>
    </location>
    <ligand>
        <name>Mg(2+)</name>
        <dbReference type="ChEBI" id="CHEBI:18420"/>
    </ligand>
</feature>
<feature type="binding site" evidence="1">
    <location>
        <position position="285"/>
    </location>
    <ligand>
        <name>substrate</name>
    </ligand>
</feature>
<feature type="binding site" evidence="1">
    <location>
        <position position="317"/>
    </location>
    <ligand>
        <name>substrate</name>
    </ligand>
</feature>
<feature type="binding site" evidence="1">
    <location>
        <position position="369"/>
    </location>
    <ligand>
        <name>substrate</name>
    </ligand>
</feature>
<feature type="site" description="Transition state stabilizer" evidence="1">
    <location>
        <position position="324"/>
    </location>
</feature>
<feature type="modified residue" description="N6,N6,N6-trimethyllysine" evidence="1">
    <location>
        <position position="4"/>
    </location>
</feature>
<feature type="modified residue" description="N6-carboxylysine" evidence="1">
    <location>
        <position position="191"/>
    </location>
</feature>
<feature type="disulfide bond" description="Interchain; in linked form" evidence="1">
    <location>
        <position position="237"/>
    </location>
</feature>
<feature type="non-terminal residue">
    <location>
        <position position="1"/>
    </location>
</feature>
<feature type="non-terminal residue">
    <location>
        <position position="441"/>
    </location>
</feature>
<accession>P28422</accession>
<name>RBL_HELNU</name>
<proteinExistence type="inferred from homology"/>
<protein>
    <recommendedName>
        <fullName evidence="1">Ribulose bisphosphate carboxylase large chain</fullName>
        <shortName evidence="1">RuBisCO large subunit</shortName>
        <ecNumber evidence="1">4.1.1.39</ecNumber>
    </recommendedName>
</protein>
<keyword id="KW-0113">Calvin cycle</keyword>
<keyword id="KW-0120">Carbon dioxide fixation</keyword>
<keyword id="KW-0150">Chloroplast</keyword>
<keyword id="KW-1015">Disulfide bond</keyword>
<keyword id="KW-0456">Lyase</keyword>
<keyword id="KW-0460">Magnesium</keyword>
<keyword id="KW-0479">Metal-binding</keyword>
<keyword id="KW-0488">Methylation</keyword>
<keyword id="KW-0503">Monooxygenase</keyword>
<keyword id="KW-0560">Oxidoreductase</keyword>
<keyword id="KW-0601">Photorespiration</keyword>
<keyword id="KW-0602">Photosynthesis</keyword>
<keyword id="KW-0934">Plastid</keyword>
<reference key="1">
    <citation type="journal article" date="1992" name="Science">
        <title>Carnivorous plants: phylogeny and structural evolution.</title>
        <authorList>
            <person name="Albert V.A."/>
            <person name="Williams S.E."/>
            <person name="Chase M.W."/>
        </authorList>
    </citation>
    <scope>NUCLEOTIDE SEQUENCE [GENOMIC DNA]</scope>
</reference>